<protein>
    <recommendedName>
        <fullName>Toxin YhaV</fullName>
        <ecNumber>3.1.-.-</ecNumber>
    </recommendedName>
    <alternativeName>
        <fullName>Ribonuclease YhaV</fullName>
    </alternativeName>
</protein>
<evidence type="ECO:0000250" key="1"/>
<reference key="1">
    <citation type="journal article" date="2001" name="Nature">
        <title>Genome sequence of enterohaemorrhagic Escherichia coli O157:H7.</title>
        <authorList>
            <person name="Perna N.T."/>
            <person name="Plunkett G. III"/>
            <person name="Burland V."/>
            <person name="Mau B."/>
            <person name="Glasner J.D."/>
            <person name="Rose D.J."/>
            <person name="Mayhew G.F."/>
            <person name="Evans P.S."/>
            <person name="Gregor J."/>
            <person name="Kirkpatrick H.A."/>
            <person name="Posfai G."/>
            <person name="Hackett J."/>
            <person name="Klink S."/>
            <person name="Boutin A."/>
            <person name="Shao Y."/>
            <person name="Miller L."/>
            <person name="Grotbeck E.J."/>
            <person name="Davis N.W."/>
            <person name="Lim A."/>
            <person name="Dimalanta E.T."/>
            <person name="Potamousis K."/>
            <person name="Apodaca J."/>
            <person name="Anantharaman T.S."/>
            <person name="Lin J."/>
            <person name="Yen G."/>
            <person name="Schwartz D.C."/>
            <person name="Welch R.A."/>
            <person name="Blattner F.R."/>
        </authorList>
    </citation>
    <scope>NUCLEOTIDE SEQUENCE [LARGE SCALE GENOMIC DNA]</scope>
    <source>
        <strain>O157:H7 / EDL933 / ATCC 700927 / EHEC</strain>
    </source>
</reference>
<reference key="2">
    <citation type="journal article" date="2001" name="DNA Res.">
        <title>Complete genome sequence of enterohemorrhagic Escherichia coli O157:H7 and genomic comparison with a laboratory strain K-12.</title>
        <authorList>
            <person name="Hayashi T."/>
            <person name="Makino K."/>
            <person name="Ohnishi M."/>
            <person name="Kurokawa K."/>
            <person name="Ishii K."/>
            <person name="Yokoyama K."/>
            <person name="Han C.-G."/>
            <person name="Ohtsubo E."/>
            <person name="Nakayama K."/>
            <person name="Murata T."/>
            <person name="Tanaka M."/>
            <person name="Tobe T."/>
            <person name="Iida T."/>
            <person name="Takami H."/>
            <person name="Honda T."/>
            <person name="Sasakawa C."/>
            <person name="Ogasawara N."/>
            <person name="Yasunaga T."/>
            <person name="Kuhara S."/>
            <person name="Shiba T."/>
            <person name="Hattori M."/>
            <person name="Shinagawa H."/>
        </authorList>
    </citation>
    <scope>NUCLEOTIDE SEQUENCE [LARGE SCALE GENOMIC DNA]</scope>
    <source>
        <strain>O157:H7 / Sakai / RIMD 0509952 / EHEC</strain>
    </source>
</reference>
<proteinExistence type="inferred from homology"/>
<accession>P64595</accession>
<accession>P42901</accession>
<dbReference type="EC" id="3.1.-.-"/>
<dbReference type="EMBL" id="AE005174">
    <property type="protein sequence ID" value="AAG58260.1"/>
    <property type="molecule type" value="Genomic_DNA"/>
</dbReference>
<dbReference type="EMBL" id="BA000007">
    <property type="protein sequence ID" value="BAB37431.1"/>
    <property type="molecule type" value="Genomic_DNA"/>
</dbReference>
<dbReference type="PIR" id="H85974">
    <property type="entry name" value="H85974"/>
</dbReference>
<dbReference type="PIR" id="H91129">
    <property type="entry name" value="H91129"/>
</dbReference>
<dbReference type="RefSeq" id="NP_312035.1">
    <property type="nucleotide sequence ID" value="NC_002695.1"/>
</dbReference>
<dbReference type="RefSeq" id="WP_000347273.1">
    <property type="nucleotide sequence ID" value="NZ_VOAI01000009.1"/>
</dbReference>
<dbReference type="SMR" id="P64595"/>
<dbReference type="STRING" id="155864.Z4482"/>
<dbReference type="GeneID" id="916158"/>
<dbReference type="KEGG" id="ece:Z4482"/>
<dbReference type="KEGG" id="ecs:ECs_4008"/>
<dbReference type="PATRIC" id="fig|386585.9.peg.4183"/>
<dbReference type="eggNOG" id="ENOG502ZB6Z">
    <property type="taxonomic scope" value="Bacteria"/>
</dbReference>
<dbReference type="HOGENOM" id="CLU_137758_0_0_6"/>
<dbReference type="OMA" id="QRHGWTL"/>
<dbReference type="Proteomes" id="UP000000558">
    <property type="component" value="Chromosome"/>
</dbReference>
<dbReference type="Proteomes" id="UP000002519">
    <property type="component" value="Chromosome"/>
</dbReference>
<dbReference type="GO" id="GO:0110001">
    <property type="term" value="C:toxin-antitoxin complex"/>
    <property type="evidence" value="ECO:0007669"/>
    <property type="project" value="InterPro"/>
</dbReference>
<dbReference type="GO" id="GO:0004519">
    <property type="term" value="F:endonuclease activity"/>
    <property type="evidence" value="ECO:0007669"/>
    <property type="project" value="UniProtKB-KW"/>
</dbReference>
<dbReference type="GO" id="GO:0004540">
    <property type="term" value="F:RNA nuclease activity"/>
    <property type="evidence" value="ECO:0007669"/>
    <property type="project" value="InterPro"/>
</dbReference>
<dbReference type="InterPro" id="IPR021679">
    <property type="entry name" value="Toxin_endonuclease_YhaV"/>
</dbReference>
<dbReference type="Pfam" id="PF11663">
    <property type="entry name" value="Toxin_YhaV"/>
    <property type="match status" value="1"/>
</dbReference>
<feature type="chain" id="PRO_0000169451" description="Toxin YhaV">
    <location>
        <begin position="1"/>
        <end position="154"/>
    </location>
</feature>
<sequence>MDFPQRVNGWALYAHPCFQETYDALVAEVETLKGKDPENYQRKAATKLLAVVHKVIEEHITVNPSSPAFRHGKSLGSGKNKDWSRVKFGAGRYRLFFRYSEKEKVIILGWMNDENTLRTYGKKTDAYTVFSKMLKRGHPPADWETLTRETEETH</sequence>
<comment type="function">
    <text evidence="1">Toxic component of a type II toxin-antitoxin (TA) system. Has RNase activity in vitro. Acts as a transcription factor. The YhaV/PrlF complex binds the prlF-yhaV operon, probably negatively regulating its expression (By similarity).</text>
</comment>
<comment type="subunit">
    <text evidence="1">Homohexamer; forms a complex with PrlF (SohA) with stoichiometry PrlF(2)-YhaV(4), possibly as a YhaV(2)-PrlF(2)-YhaV(2) complex like the MazFE complex. May dimerize in solution (By similarity).</text>
</comment>
<name>YHAV_ECO57</name>
<keyword id="KW-0255">Endonuclease</keyword>
<keyword id="KW-0378">Hydrolase</keyword>
<keyword id="KW-0540">Nuclease</keyword>
<keyword id="KW-1185">Reference proteome</keyword>
<keyword id="KW-0678">Repressor</keyword>
<keyword id="KW-1277">Toxin-antitoxin system</keyword>
<keyword id="KW-0804">Transcription</keyword>
<keyword id="KW-0805">Transcription regulation</keyword>
<gene>
    <name type="primary">yhaV</name>
    <name type="ordered locus">Z4482</name>
    <name type="ordered locus">ECs4008</name>
</gene>
<organism>
    <name type="scientific">Escherichia coli O157:H7</name>
    <dbReference type="NCBI Taxonomy" id="83334"/>
    <lineage>
        <taxon>Bacteria</taxon>
        <taxon>Pseudomonadati</taxon>
        <taxon>Pseudomonadota</taxon>
        <taxon>Gammaproteobacteria</taxon>
        <taxon>Enterobacterales</taxon>
        <taxon>Enterobacteriaceae</taxon>
        <taxon>Escherichia</taxon>
    </lineage>
</organism>